<comment type="function">
    <text evidence="1">Quinone reductase that provides resistance to thiol-specific stress caused by electrophilic quinones.</text>
</comment>
<comment type="function">
    <text evidence="1">Also exhibits azoreductase activity. Catalyzes the reductive cleavage of the azo bond in aromatic azo compounds to the corresponding amines.</text>
</comment>
<comment type="catalytic activity">
    <reaction evidence="1">
        <text>2 a quinone + NADH + H(+) = 2 a 1,4-benzosemiquinone + NAD(+)</text>
        <dbReference type="Rhea" id="RHEA:65952"/>
        <dbReference type="ChEBI" id="CHEBI:15378"/>
        <dbReference type="ChEBI" id="CHEBI:57540"/>
        <dbReference type="ChEBI" id="CHEBI:57945"/>
        <dbReference type="ChEBI" id="CHEBI:132124"/>
        <dbReference type="ChEBI" id="CHEBI:134225"/>
    </reaction>
</comment>
<comment type="catalytic activity">
    <reaction evidence="1">
        <text>N,N-dimethyl-1,4-phenylenediamine + anthranilate + 2 NAD(+) = 2-(4-dimethylaminophenyl)diazenylbenzoate + 2 NADH + 2 H(+)</text>
        <dbReference type="Rhea" id="RHEA:55872"/>
        <dbReference type="ChEBI" id="CHEBI:15378"/>
        <dbReference type="ChEBI" id="CHEBI:15783"/>
        <dbReference type="ChEBI" id="CHEBI:16567"/>
        <dbReference type="ChEBI" id="CHEBI:57540"/>
        <dbReference type="ChEBI" id="CHEBI:57945"/>
        <dbReference type="ChEBI" id="CHEBI:71579"/>
        <dbReference type="EC" id="1.7.1.17"/>
    </reaction>
</comment>
<comment type="cofactor">
    <cofactor evidence="1">
        <name>FMN</name>
        <dbReference type="ChEBI" id="CHEBI:58210"/>
    </cofactor>
    <text evidence="1">Binds 1 FMN per subunit.</text>
</comment>
<comment type="subunit">
    <text evidence="1">Homodimer.</text>
</comment>
<comment type="similarity">
    <text evidence="1">Belongs to the azoreductase type 1 family.</text>
</comment>
<accession>Q2N970</accession>
<name>AZOR_ERYLH</name>
<proteinExistence type="inferred from homology"/>
<gene>
    <name evidence="1" type="primary">azoR</name>
    <name type="ordered locus">ELI_08395</name>
</gene>
<feature type="chain" id="PRO_1000066508" description="FMN-dependent NADH:quinone oxidoreductase">
    <location>
        <begin position="1"/>
        <end position="197"/>
    </location>
</feature>
<feature type="binding site" evidence="1">
    <location>
        <position position="10"/>
    </location>
    <ligand>
        <name>FMN</name>
        <dbReference type="ChEBI" id="CHEBI:58210"/>
    </ligand>
</feature>
<feature type="binding site" evidence="1">
    <location>
        <begin position="16"/>
        <end position="18"/>
    </location>
    <ligand>
        <name>FMN</name>
        <dbReference type="ChEBI" id="CHEBI:58210"/>
    </ligand>
</feature>
<reference key="1">
    <citation type="journal article" date="2009" name="J. Bacteriol.">
        <title>Complete genome sequence of Erythrobacter litoralis HTCC2594.</title>
        <authorList>
            <person name="Oh H.M."/>
            <person name="Giovannoni S.J."/>
            <person name="Ferriera S."/>
            <person name="Johnson J."/>
            <person name="Cho J.C."/>
        </authorList>
    </citation>
    <scope>NUCLEOTIDE SEQUENCE [LARGE SCALE GENOMIC DNA]</scope>
    <source>
        <strain>HTCC2594</strain>
    </source>
</reference>
<sequence>MSTILHITASIRGDESISRALSSKLVERLSGTDTKVITRDLSQNDIPYVDADRFAANLSPYTERSPEQQELAAIADTLIEELQAADTIVLGVPIYNFSVPATVKAWADTVARAGTTFEYTPTGPKGKLDGKKAYITVASGGTPVGSEVDFMSPWLKFFLGFLGISEVEVVATADGIMGEGGEEKIASAHKQVEQVAA</sequence>
<dbReference type="EC" id="1.6.5.-" evidence="1"/>
<dbReference type="EC" id="1.7.1.17" evidence="1"/>
<dbReference type="EMBL" id="CP000157">
    <property type="protein sequence ID" value="ABC63771.1"/>
    <property type="molecule type" value="Genomic_DNA"/>
</dbReference>
<dbReference type="RefSeq" id="WP_011414601.1">
    <property type="nucleotide sequence ID" value="NC_007722.1"/>
</dbReference>
<dbReference type="SMR" id="Q2N970"/>
<dbReference type="STRING" id="314225.ELI_08395"/>
<dbReference type="KEGG" id="eli:ELI_08395"/>
<dbReference type="eggNOG" id="COG1182">
    <property type="taxonomic scope" value="Bacteria"/>
</dbReference>
<dbReference type="HOGENOM" id="CLU_088964_0_0_5"/>
<dbReference type="OrthoDB" id="9787136at2"/>
<dbReference type="Proteomes" id="UP000008808">
    <property type="component" value="Chromosome"/>
</dbReference>
<dbReference type="GO" id="GO:0009055">
    <property type="term" value="F:electron transfer activity"/>
    <property type="evidence" value="ECO:0007669"/>
    <property type="project" value="UniProtKB-UniRule"/>
</dbReference>
<dbReference type="GO" id="GO:0010181">
    <property type="term" value="F:FMN binding"/>
    <property type="evidence" value="ECO:0007669"/>
    <property type="project" value="UniProtKB-UniRule"/>
</dbReference>
<dbReference type="GO" id="GO:0016652">
    <property type="term" value="F:oxidoreductase activity, acting on NAD(P)H as acceptor"/>
    <property type="evidence" value="ECO:0007669"/>
    <property type="project" value="UniProtKB-UniRule"/>
</dbReference>
<dbReference type="GO" id="GO:0016655">
    <property type="term" value="F:oxidoreductase activity, acting on NAD(P)H, quinone or similar compound as acceptor"/>
    <property type="evidence" value="ECO:0007669"/>
    <property type="project" value="InterPro"/>
</dbReference>
<dbReference type="Gene3D" id="3.40.50.360">
    <property type="match status" value="1"/>
</dbReference>
<dbReference type="HAMAP" id="MF_01216">
    <property type="entry name" value="Azoreductase_type1"/>
    <property type="match status" value="1"/>
</dbReference>
<dbReference type="InterPro" id="IPR003680">
    <property type="entry name" value="Flavodoxin_fold"/>
</dbReference>
<dbReference type="InterPro" id="IPR029039">
    <property type="entry name" value="Flavoprotein-like_sf"/>
</dbReference>
<dbReference type="InterPro" id="IPR050104">
    <property type="entry name" value="FMN-dep_NADH:Q_OxRdtase_AzoR1"/>
</dbReference>
<dbReference type="InterPro" id="IPR023048">
    <property type="entry name" value="NADH:quinone_OxRdtase_FMN_depd"/>
</dbReference>
<dbReference type="PANTHER" id="PTHR43741">
    <property type="entry name" value="FMN-DEPENDENT NADH-AZOREDUCTASE 1"/>
    <property type="match status" value="1"/>
</dbReference>
<dbReference type="PANTHER" id="PTHR43741:SF4">
    <property type="entry name" value="FMN-DEPENDENT NADH:QUINONE OXIDOREDUCTASE"/>
    <property type="match status" value="1"/>
</dbReference>
<dbReference type="Pfam" id="PF02525">
    <property type="entry name" value="Flavodoxin_2"/>
    <property type="match status" value="1"/>
</dbReference>
<dbReference type="SUPFAM" id="SSF52218">
    <property type="entry name" value="Flavoproteins"/>
    <property type="match status" value="1"/>
</dbReference>
<keyword id="KW-0285">Flavoprotein</keyword>
<keyword id="KW-0288">FMN</keyword>
<keyword id="KW-0520">NAD</keyword>
<keyword id="KW-0560">Oxidoreductase</keyword>
<keyword id="KW-1185">Reference proteome</keyword>
<evidence type="ECO:0000255" key="1">
    <source>
        <dbReference type="HAMAP-Rule" id="MF_01216"/>
    </source>
</evidence>
<protein>
    <recommendedName>
        <fullName evidence="1">FMN-dependent NADH:quinone oxidoreductase</fullName>
        <ecNumber evidence="1">1.6.5.-</ecNumber>
    </recommendedName>
    <alternativeName>
        <fullName evidence="1">Azo-dye reductase</fullName>
    </alternativeName>
    <alternativeName>
        <fullName evidence="1">FMN-dependent NADH-azo compound oxidoreductase</fullName>
    </alternativeName>
    <alternativeName>
        <fullName evidence="1">FMN-dependent NADH-azoreductase</fullName>
        <ecNumber evidence="1">1.7.1.17</ecNumber>
    </alternativeName>
</protein>
<organism>
    <name type="scientific">Erythrobacter litoralis (strain HTCC2594)</name>
    <dbReference type="NCBI Taxonomy" id="314225"/>
    <lineage>
        <taxon>Bacteria</taxon>
        <taxon>Pseudomonadati</taxon>
        <taxon>Pseudomonadota</taxon>
        <taxon>Alphaproteobacteria</taxon>
        <taxon>Sphingomonadales</taxon>
        <taxon>Erythrobacteraceae</taxon>
        <taxon>Erythrobacter/Porphyrobacter group</taxon>
        <taxon>Erythrobacter</taxon>
    </lineage>
</organism>